<protein>
    <recommendedName>
        <fullName>Xylose isomerase</fullName>
        <ecNumber>5.3.1.5</ecNumber>
    </recommendedName>
</protein>
<gene>
    <name type="primary">xylA</name>
</gene>
<reference key="1">
    <citation type="journal article" date="1999" name="Acta Crystallogr. D">
        <title>A thermostable xylose isomerase from Thermus caldophilus: biochemical characterization, crystallization and preliminary X-ray analysis.</title>
        <authorList>
            <person name="Chang C."/>
            <person name="Song H.K."/>
            <person name="Park B.C."/>
            <person name="Lee D.-S."/>
            <person name="Suh S.W."/>
        </authorList>
    </citation>
    <scope>CRYSTALLIZATION</scope>
    <scope>CHARACTERIZATION</scope>
    <source>
        <strain>GK24</strain>
    </source>
</reference>
<reference key="2">
    <citation type="journal article" date="1999" name="J. Mol. Biol.">
        <title>Crystal structures of thermostable xylose isomerases from Thermus caldophilus and Thermus thermophilus: possible structural determinants of thermostability.</title>
        <authorList>
            <person name="Chang C."/>
            <person name="Park B.C."/>
            <person name="Lee D.-S."/>
            <person name="Suh S.W."/>
        </authorList>
    </citation>
    <scope>X-RAY CRYSTALLOGRAPHY (2.3 ANGSTROMS)</scope>
    <source>
        <strain>GK24</strain>
    </source>
</reference>
<comment type="catalytic activity">
    <reaction>
        <text>alpha-D-xylose = alpha-D-xylulofuranose</text>
        <dbReference type="Rhea" id="RHEA:22816"/>
        <dbReference type="ChEBI" id="CHEBI:28518"/>
        <dbReference type="ChEBI" id="CHEBI:188998"/>
        <dbReference type="EC" id="5.3.1.5"/>
    </reaction>
</comment>
<comment type="cofactor">
    <cofactor evidence="1">
        <name>Mg(2+)</name>
        <dbReference type="ChEBI" id="CHEBI:18420"/>
    </cofactor>
    <text evidence="1">Binds 2 magnesium ions per subunit.</text>
</comment>
<comment type="subunit">
    <text>Homotetramer.</text>
</comment>
<comment type="subcellular location">
    <subcellularLocation>
        <location>Cytoplasm</location>
    </subcellularLocation>
</comment>
<comment type="similarity">
    <text evidence="2">Belongs to the xylose isomerase family.</text>
</comment>
<name>XYLA_THECA</name>
<feature type="chain" id="PRO_0000195811" description="Xylose isomerase">
    <location>
        <begin position="1"/>
        <end position="387"/>
    </location>
</feature>
<feature type="active site" evidence="1">
    <location>
        <position position="53"/>
    </location>
</feature>
<feature type="active site" evidence="1">
    <location>
        <position position="56"/>
    </location>
</feature>
<feature type="binding site" evidence="1">
    <location>
        <position position="180"/>
    </location>
    <ligand>
        <name>Mg(2+)</name>
        <dbReference type="ChEBI" id="CHEBI:18420"/>
        <label>1</label>
    </ligand>
</feature>
<feature type="binding site" evidence="1">
    <location>
        <position position="216"/>
    </location>
    <ligand>
        <name>Mg(2+)</name>
        <dbReference type="ChEBI" id="CHEBI:18420"/>
        <label>1</label>
    </ligand>
</feature>
<feature type="binding site" evidence="1">
    <location>
        <position position="216"/>
    </location>
    <ligand>
        <name>Mg(2+)</name>
        <dbReference type="ChEBI" id="CHEBI:18420"/>
        <label>2</label>
    </ligand>
</feature>
<feature type="binding site" evidence="1">
    <location>
        <position position="219"/>
    </location>
    <ligand>
        <name>Mg(2+)</name>
        <dbReference type="ChEBI" id="CHEBI:18420"/>
        <label>2</label>
    </ligand>
</feature>
<feature type="binding site" evidence="1">
    <location>
        <position position="244"/>
    </location>
    <ligand>
        <name>Mg(2+)</name>
        <dbReference type="ChEBI" id="CHEBI:18420"/>
        <label>1</label>
    </ligand>
</feature>
<feature type="binding site" evidence="1">
    <location>
        <position position="254"/>
    </location>
    <ligand>
        <name>Mg(2+)</name>
        <dbReference type="ChEBI" id="CHEBI:18420"/>
        <label>2</label>
    </ligand>
</feature>
<feature type="binding site" evidence="1">
    <location>
        <position position="256"/>
    </location>
    <ligand>
        <name>Mg(2+)</name>
        <dbReference type="ChEBI" id="CHEBI:18420"/>
        <label>2</label>
    </ligand>
</feature>
<feature type="binding site" evidence="1">
    <location>
        <position position="286"/>
    </location>
    <ligand>
        <name>Mg(2+)</name>
        <dbReference type="ChEBI" id="CHEBI:18420"/>
        <label>1</label>
    </ligand>
</feature>
<feature type="helix" evidence="3">
    <location>
        <begin position="6"/>
        <end position="8"/>
    </location>
</feature>
<feature type="strand" evidence="3">
    <location>
        <begin position="10"/>
        <end position="13"/>
    </location>
</feature>
<feature type="helix" evidence="3">
    <location>
        <begin position="14"/>
        <end position="17"/>
    </location>
</feature>
<feature type="helix" evidence="3">
    <location>
        <begin position="35"/>
        <end position="45"/>
    </location>
</feature>
<feature type="strand" evidence="3">
    <location>
        <begin position="48"/>
        <end position="53"/>
    </location>
</feature>
<feature type="helix" evidence="3">
    <location>
        <begin position="54"/>
        <end position="57"/>
    </location>
</feature>
<feature type="helix" evidence="3">
    <location>
        <begin position="64"/>
        <end position="81"/>
    </location>
</feature>
<feature type="strand" evidence="3">
    <location>
        <begin position="87"/>
        <end position="89"/>
    </location>
</feature>
<feature type="strand" evidence="3">
    <location>
        <begin position="93"/>
        <end position="95"/>
    </location>
</feature>
<feature type="helix" evidence="3">
    <location>
        <begin position="96"/>
        <end position="98"/>
    </location>
</feature>
<feature type="helix" evidence="3">
    <location>
        <begin position="108"/>
        <end position="127"/>
    </location>
</feature>
<feature type="strand" evidence="3">
    <location>
        <begin position="132"/>
        <end position="135"/>
    </location>
</feature>
<feature type="strand" evidence="3">
    <location>
        <begin position="141"/>
        <end position="143"/>
    </location>
</feature>
<feature type="helix" evidence="3">
    <location>
        <begin position="145"/>
        <end position="147"/>
    </location>
</feature>
<feature type="helix" evidence="3">
    <location>
        <begin position="149"/>
        <end position="151"/>
    </location>
</feature>
<feature type="helix" evidence="3">
    <location>
        <begin position="153"/>
        <end position="171"/>
    </location>
</feature>
<feature type="strand" evidence="3">
    <location>
        <begin position="176"/>
        <end position="179"/>
    </location>
</feature>
<feature type="strand" evidence="3">
    <location>
        <begin position="183"/>
        <end position="192"/>
    </location>
</feature>
<feature type="helix" evidence="3">
    <location>
        <begin position="195"/>
        <end position="202"/>
    </location>
</feature>
<feature type="strand" evidence="3">
    <location>
        <begin position="205"/>
        <end position="207"/>
    </location>
</feature>
<feature type="helix" evidence="3">
    <location>
        <begin position="208"/>
        <end position="210"/>
    </location>
</feature>
<feature type="strand" evidence="3">
    <location>
        <begin position="211"/>
        <end position="213"/>
    </location>
</feature>
<feature type="helix" evidence="3">
    <location>
        <begin position="217"/>
        <end position="221"/>
    </location>
</feature>
<feature type="turn" evidence="3">
    <location>
        <begin position="222"/>
        <end position="224"/>
    </location>
</feature>
<feature type="helix" evidence="3">
    <location>
        <begin position="227"/>
        <end position="237"/>
    </location>
</feature>
<feature type="strand" evidence="3">
    <location>
        <begin position="243"/>
        <end position="245"/>
    </location>
</feature>
<feature type="strand" evidence="3">
    <location>
        <begin position="250"/>
        <end position="253"/>
    </location>
</feature>
<feature type="helix" evidence="3">
    <location>
        <begin position="264"/>
        <end position="276"/>
    </location>
</feature>
<feature type="strand" evidence="3">
    <location>
        <begin position="283"/>
        <end position="285"/>
    </location>
</feature>
<feature type="helix" evidence="3">
    <location>
        <begin position="295"/>
        <end position="321"/>
    </location>
</feature>
<feature type="helix" evidence="3">
    <location>
        <begin position="323"/>
        <end position="332"/>
    </location>
</feature>
<feature type="turn" evidence="3">
    <location>
        <begin position="337"/>
        <end position="339"/>
    </location>
</feature>
<feature type="helix" evidence="3">
    <location>
        <begin position="340"/>
        <end position="342"/>
    </location>
</feature>
<feature type="strand" evidence="3">
    <location>
        <begin position="343"/>
        <end position="345"/>
    </location>
</feature>
<feature type="helix" evidence="3">
    <location>
        <begin position="348"/>
        <end position="356"/>
    </location>
</feature>
<feature type="helix" evidence="3">
    <location>
        <begin position="361"/>
        <end position="365"/>
    </location>
</feature>
<feature type="helix" evidence="3">
    <location>
        <begin position="371"/>
        <end position="382"/>
    </location>
</feature>
<evidence type="ECO:0000250" key="1"/>
<evidence type="ECO:0000305" key="2"/>
<evidence type="ECO:0007829" key="3">
    <source>
        <dbReference type="PDB" id="1BXC"/>
    </source>
</evidence>
<proteinExistence type="evidence at protein level"/>
<dbReference type="EC" id="5.3.1.5"/>
<dbReference type="PDB" id="1BXC">
    <property type="method" value="X-ray"/>
    <property type="resolution" value="2.30 A"/>
    <property type="chains" value="A/B/C/D=1-387"/>
</dbReference>
<dbReference type="PDBsum" id="1BXC"/>
<dbReference type="SMR" id="P56681"/>
<dbReference type="EvolutionaryTrace" id="P56681"/>
<dbReference type="GO" id="GO:0005737">
    <property type="term" value="C:cytoplasm"/>
    <property type="evidence" value="ECO:0007669"/>
    <property type="project" value="UniProtKB-SubCell"/>
</dbReference>
<dbReference type="GO" id="GO:0000287">
    <property type="term" value="F:magnesium ion binding"/>
    <property type="evidence" value="ECO:0007669"/>
    <property type="project" value="UniProtKB-UniRule"/>
</dbReference>
<dbReference type="GO" id="GO:0009045">
    <property type="term" value="F:xylose isomerase activity"/>
    <property type="evidence" value="ECO:0007669"/>
    <property type="project" value="UniProtKB-UniRule"/>
</dbReference>
<dbReference type="GO" id="GO:0042732">
    <property type="term" value="P:D-xylose metabolic process"/>
    <property type="evidence" value="ECO:0007669"/>
    <property type="project" value="UniProtKB-UniRule"/>
</dbReference>
<dbReference type="Gene3D" id="3.20.20.150">
    <property type="entry name" value="Divalent-metal-dependent TIM barrel enzymes"/>
    <property type="match status" value="1"/>
</dbReference>
<dbReference type="HAMAP" id="MF_00455">
    <property type="entry name" value="Xylose_isom_A"/>
    <property type="match status" value="1"/>
</dbReference>
<dbReference type="InterPro" id="IPR036237">
    <property type="entry name" value="Xyl_isomerase-like_sf"/>
</dbReference>
<dbReference type="InterPro" id="IPR013022">
    <property type="entry name" value="Xyl_isomerase-like_TIM-brl"/>
</dbReference>
<dbReference type="InterPro" id="IPR013453">
    <property type="entry name" value="XylA_actinobac"/>
</dbReference>
<dbReference type="InterPro" id="IPR001998">
    <property type="entry name" value="Xylose_isomerase"/>
</dbReference>
<dbReference type="NCBIfam" id="TIGR02631">
    <property type="entry name" value="xylA_Arthro"/>
    <property type="match status" value="1"/>
</dbReference>
<dbReference type="PANTHER" id="PTHR48408">
    <property type="match status" value="1"/>
</dbReference>
<dbReference type="PANTHER" id="PTHR48408:SF1">
    <property type="entry name" value="XYLOSE ISOMERASE"/>
    <property type="match status" value="1"/>
</dbReference>
<dbReference type="Pfam" id="PF01261">
    <property type="entry name" value="AP_endonuc_2"/>
    <property type="match status" value="1"/>
</dbReference>
<dbReference type="PRINTS" id="PR00688">
    <property type="entry name" value="XYLOSISMRASE"/>
</dbReference>
<dbReference type="SUPFAM" id="SSF51658">
    <property type="entry name" value="Xylose isomerase-like"/>
    <property type="match status" value="1"/>
</dbReference>
<dbReference type="PROSITE" id="PS51415">
    <property type="entry name" value="XYLOSE_ISOMERASE"/>
    <property type="match status" value="1"/>
</dbReference>
<keyword id="KW-0002">3D-structure</keyword>
<keyword id="KW-0119">Carbohydrate metabolism</keyword>
<keyword id="KW-0963">Cytoplasm</keyword>
<keyword id="KW-0413">Isomerase</keyword>
<keyword id="KW-0460">Magnesium</keyword>
<keyword id="KW-0479">Metal-binding</keyword>
<keyword id="KW-0859">Xylose metabolism</keyword>
<accession>P56681</accession>
<sequence length="387" mass="43860">MYEPKPEHRFTFGLWTVGNVGRDPFGDAVRERLDPVYVGHKLAELGVHGVNLHDEDLIPRGTPPAERDQIVRRFKRALDETGLKVPMVTGNLFSDPGFKDGGFTSRDPWVRAYAFRKSLETMDLGAELGAEIYVVWPGREGAEVEATGKARKVWDWVREPLNFMAAYAEDQGYGYRFALEPKPNEPRGDIYFATVGSMLALIHTLERPERFGLNPEFAHETMAGLNFVHAVAQALDAGKLLHIDLNGQRMNRFDQDLRFGSENLKAAFLLVDLLESSGYQGPRHFDAHALRTEDEEGVWAFARGCMRTYLILKERAEAFREDPEVKELLAAYYQEDPAALPLMDPYSHEKAEALKRAELPLEAKRHRGYALERLDQLAVEYLLGVRG</sequence>
<organism>
    <name type="scientific">Thermus caldophilus</name>
    <dbReference type="NCBI Taxonomy" id="272"/>
    <lineage>
        <taxon>Bacteria</taxon>
        <taxon>Thermotogati</taxon>
        <taxon>Deinococcota</taxon>
        <taxon>Deinococci</taxon>
        <taxon>Thermales</taxon>
        <taxon>Thermaceae</taxon>
        <taxon>Thermus</taxon>
    </lineage>
</organism>